<protein>
    <recommendedName>
        <fullName evidence="1">Threonine--tRNA ligase</fullName>
        <ecNumber evidence="1">6.1.1.3</ecNumber>
    </recommendedName>
    <alternativeName>
        <fullName evidence="1">Threonyl-tRNA synthetase</fullName>
        <shortName evidence="1">ThrRS</shortName>
    </alternativeName>
</protein>
<comment type="function">
    <text evidence="1">Catalyzes the attachment of threonine to tRNA(Thr) in a two-step reaction: L-threonine is first activated by ATP to form Thr-AMP and then transferred to the acceptor end of tRNA(Thr). Also edits incorrectly charged L-seryl-tRNA(Thr).</text>
</comment>
<comment type="catalytic activity">
    <reaction evidence="1">
        <text>tRNA(Thr) + L-threonine + ATP = L-threonyl-tRNA(Thr) + AMP + diphosphate + H(+)</text>
        <dbReference type="Rhea" id="RHEA:24624"/>
        <dbReference type="Rhea" id="RHEA-COMP:9670"/>
        <dbReference type="Rhea" id="RHEA-COMP:9704"/>
        <dbReference type="ChEBI" id="CHEBI:15378"/>
        <dbReference type="ChEBI" id="CHEBI:30616"/>
        <dbReference type="ChEBI" id="CHEBI:33019"/>
        <dbReference type="ChEBI" id="CHEBI:57926"/>
        <dbReference type="ChEBI" id="CHEBI:78442"/>
        <dbReference type="ChEBI" id="CHEBI:78534"/>
        <dbReference type="ChEBI" id="CHEBI:456215"/>
        <dbReference type="EC" id="6.1.1.3"/>
    </reaction>
</comment>
<comment type="cofactor">
    <cofactor evidence="1">
        <name>Zn(2+)</name>
        <dbReference type="ChEBI" id="CHEBI:29105"/>
    </cofactor>
    <text evidence="1">Binds 1 zinc ion per subunit.</text>
</comment>
<comment type="subunit">
    <text evidence="1">Homodimer.</text>
</comment>
<comment type="subcellular location">
    <subcellularLocation>
        <location evidence="1">Cytoplasm</location>
    </subcellularLocation>
</comment>
<comment type="similarity">
    <text evidence="1">Belongs to the class-II aminoacyl-tRNA synthetase family.</text>
</comment>
<name>SYT_BORAP</name>
<gene>
    <name evidence="1" type="primary">thrS</name>
    <name type="ordered locus">BAPKO_0764</name>
    <name type="ordered locus">BafPKo_0744</name>
</gene>
<keyword id="KW-0030">Aminoacyl-tRNA synthetase</keyword>
<keyword id="KW-0067">ATP-binding</keyword>
<keyword id="KW-0963">Cytoplasm</keyword>
<keyword id="KW-0436">Ligase</keyword>
<keyword id="KW-0479">Metal-binding</keyword>
<keyword id="KW-0547">Nucleotide-binding</keyword>
<keyword id="KW-0648">Protein biosynthesis</keyword>
<keyword id="KW-0694">RNA-binding</keyword>
<keyword id="KW-0820">tRNA-binding</keyword>
<keyword id="KW-0862">Zinc</keyword>
<accession>Q0SMD6</accession>
<accession>G0IRH1</accession>
<organism>
    <name type="scientific">Borreliella afzelii (strain PKo)</name>
    <name type="common">Borrelia afzelii</name>
    <dbReference type="NCBI Taxonomy" id="390236"/>
    <lineage>
        <taxon>Bacteria</taxon>
        <taxon>Pseudomonadati</taxon>
        <taxon>Spirochaetota</taxon>
        <taxon>Spirochaetia</taxon>
        <taxon>Spirochaetales</taxon>
        <taxon>Borreliaceae</taxon>
        <taxon>Borreliella</taxon>
    </lineage>
</organism>
<sequence>MSKDLDKEDVLYKKRHSIAHVMAEAVRDLFPNTKIAIGPPIKDGFYYDFEFKKQITEDSLLDIENRMREILKTGSSFEKELISVEQALEIFKDEPYKIDLIKNFDLQNEISIYKSHNFIDLCRGPHVDNMNKIDPKAFKLTSIAGAYWRGNEKNTMLTRIYGTLWNNEKELRSYLNLREEIKKRDHRKLGKELDLFSIHEEIGPGLVFFHPNGAKIRALIEDFWREEHSKNGYDILFTPHIGKSWLWQTSGHLDFYKDSMFEKMEMDKSDYYLKPMNCPFHIAIYNTGKHSYRDLPFRWAELGTVYRYEKIGALHGIMRARGFTQDDAHIICTHSQVLDEIKEVLRFAIYMWSKFGFNSLKAYLSTKPDKFVGNDSDWEMSLKVLEEALSGFEVPYEIDKGGGAFYGPKIDLKIVDSLEREWQMSTIQFDFNLPERFNMTYTAEDGKEKRPFMIHRALLGSIERFFGILIEHYGGAFPLWLSPIQAVIIPVNNAVEDYAIKVFNKFKNEGMRIKLDNTSSRMNAKIREYQAKKIPYMFIIGEREAKEEKISIRTRTNEQINGLELDEALKLILLKIRDKEI</sequence>
<dbReference type="EC" id="6.1.1.3" evidence="1"/>
<dbReference type="EMBL" id="CP000395">
    <property type="protein sequence ID" value="ABH01992.1"/>
    <property type="molecule type" value="Genomic_DNA"/>
</dbReference>
<dbReference type="EMBL" id="CP002933">
    <property type="protein sequence ID" value="AEL69937.1"/>
    <property type="molecule type" value="Genomic_DNA"/>
</dbReference>
<dbReference type="RefSeq" id="WP_004789468.1">
    <property type="nucleotide sequence ID" value="NZ_CP160066.1"/>
</dbReference>
<dbReference type="SMR" id="Q0SMD6"/>
<dbReference type="STRING" id="29518.BLA32_00630"/>
<dbReference type="KEGG" id="baf:BAPKO_0764"/>
<dbReference type="KEGG" id="bafz:BafPKo_0744"/>
<dbReference type="PATRIC" id="fig|390236.22.peg.710"/>
<dbReference type="eggNOG" id="COG0441">
    <property type="taxonomic scope" value="Bacteria"/>
</dbReference>
<dbReference type="HOGENOM" id="CLU_008554_0_1_12"/>
<dbReference type="OrthoDB" id="9802304at2"/>
<dbReference type="Proteomes" id="UP000005216">
    <property type="component" value="Chromosome"/>
</dbReference>
<dbReference type="GO" id="GO:0005737">
    <property type="term" value="C:cytoplasm"/>
    <property type="evidence" value="ECO:0007669"/>
    <property type="project" value="UniProtKB-SubCell"/>
</dbReference>
<dbReference type="GO" id="GO:0005524">
    <property type="term" value="F:ATP binding"/>
    <property type="evidence" value="ECO:0007669"/>
    <property type="project" value="UniProtKB-UniRule"/>
</dbReference>
<dbReference type="GO" id="GO:0046872">
    <property type="term" value="F:metal ion binding"/>
    <property type="evidence" value="ECO:0007669"/>
    <property type="project" value="UniProtKB-KW"/>
</dbReference>
<dbReference type="GO" id="GO:0004829">
    <property type="term" value="F:threonine-tRNA ligase activity"/>
    <property type="evidence" value="ECO:0007669"/>
    <property type="project" value="UniProtKB-UniRule"/>
</dbReference>
<dbReference type="GO" id="GO:0000049">
    <property type="term" value="F:tRNA binding"/>
    <property type="evidence" value="ECO:0007669"/>
    <property type="project" value="UniProtKB-KW"/>
</dbReference>
<dbReference type="GO" id="GO:0006435">
    <property type="term" value="P:threonyl-tRNA aminoacylation"/>
    <property type="evidence" value="ECO:0007669"/>
    <property type="project" value="UniProtKB-UniRule"/>
</dbReference>
<dbReference type="CDD" id="cd00860">
    <property type="entry name" value="ThrRS_anticodon"/>
    <property type="match status" value="1"/>
</dbReference>
<dbReference type="CDD" id="cd00771">
    <property type="entry name" value="ThrRS_core"/>
    <property type="match status" value="1"/>
</dbReference>
<dbReference type="FunFam" id="3.30.930.10:FF:000019">
    <property type="entry name" value="Threonine--tRNA ligase"/>
    <property type="match status" value="1"/>
</dbReference>
<dbReference type="FunFam" id="3.40.50.800:FF:000001">
    <property type="entry name" value="Threonine--tRNA ligase"/>
    <property type="match status" value="1"/>
</dbReference>
<dbReference type="FunFam" id="3.30.980.10:FF:000005">
    <property type="entry name" value="Threonyl-tRNA synthetase, mitochondrial"/>
    <property type="match status" value="1"/>
</dbReference>
<dbReference type="Gene3D" id="3.30.54.20">
    <property type="match status" value="1"/>
</dbReference>
<dbReference type="Gene3D" id="3.40.50.800">
    <property type="entry name" value="Anticodon-binding domain"/>
    <property type="match status" value="1"/>
</dbReference>
<dbReference type="Gene3D" id="3.30.930.10">
    <property type="entry name" value="Bira Bifunctional Protein, Domain 2"/>
    <property type="match status" value="1"/>
</dbReference>
<dbReference type="Gene3D" id="3.30.980.10">
    <property type="entry name" value="Threonyl-trna Synthetase, Chain A, domain 2"/>
    <property type="match status" value="1"/>
</dbReference>
<dbReference type="HAMAP" id="MF_00184">
    <property type="entry name" value="Thr_tRNA_synth"/>
    <property type="match status" value="1"/>
</dbReference>
<dbReference type="InterPro" id="IPR002314">
    <property type="entry name" value="aa-tRNA-synt_IIb"/>
</dbReference>
<dbReference type="InterPro" id="IPR006195">
    <property type="entry name" value="aa-tRNA-synth_II"/>
</dbReference>
<dbReference type="InterPro" id="IPR045864">
    <property type="entry name" value="aa-tRNA-synth_II/BPL/LPL"/>
</dbReference>
<dbReference type="InterPro" id="IPR004154">
    <property type="entry name" value="Anticodon-bd"/>
</dbReference>
<dbReference type="InterPro" id="IPR036621">
    <property type="entry name" value="Anticodon-bd_dom_sf"/>
</dbReference>
<dbReference type="InterPro" id="IPR002320">
    <property type="entry name" value="Thr-tRNA-ligase_IIa"/>
</dbReference>
<dbReference type="InterPro" id="IPR018163">
    <property type="entry name" value="Thr/Ala-tRNA-synth_IIc_edit"/>
</dbReference>
<dbReference type="InterPro" id="IPR047246">
    <property type="entry name" value="ThrRS_anticodon"/>
</dbReference>
<dbReference type="InterPro" id="IPR033728">
    <property type="entry name" value="ThrRS_core"/>
</dbReference>
<dbReference type="InterPro" id="IPR012947">
    <property type="entry name" value="tRNA_SAD"/>
</dbReference>
<dbReference type="NCBIfam" id="TIGR00418">
    <property type="entry name" value="thrS"/>
    <property type="match status" value="1"/>
</dbReference>
<dbReference type="PANTHER" id="PTHR11451:SF44">
    <property type="entry name" value="THREONINE--TRNA LIGASE, CHLOROPLASTIC_MITOCHONDRIAL 2"/>
    <property type="match status" value="1"/>
</dbReference>
<dbReference type="PANTHER" id="PTHR11451">
    <property type="entry name" value="THREONINE-TRNA LIGASE"/>
    <property type="match status" value="1"/>
</dbReference>
<dbReference type="Pfam" id="PF03129">
    <property type="entry name" value="HGTP_anticodon"/>
    <property type="match status" value="1"/>
</dbReference>
<dbReference type="Pfam" id="PF00587">
    <property type="entry name" value="tRNA-synt_2b"/>
    <property type="match status" value="1"/>
</dbReference>
<dbReference type="Pfam" id="PF07973">
    <property type="entry name" value="tRNA_SAD"/>
    <property type="match status" value="1"/>
</dbReference>
<dbReference type="PRINTS" id="PR01047">
    <property type="entry name" value="TRNASYNTHTHR"/>
</dbReference>
<dbReference type="SMART" id="SM00863">
    <property type="entry name" value="tRNA_SAD"/>
    <property type="match status" value="1"/>
</dbReference>
<dbReference type="SUPFAM" id="SSF52954">
    <property type="entry name" value="Class II aaRS ABD-related"/>
    <property type="match status" value="1"/>
</dbReference>
<dbReference type="SUPFAM" id="SSF55681">
    <property type="entry name" value="Class II aaRS and biotin synthetases"/>
    <property type="match status" value="1"/>
</dbReference>
<dbReference type="SUPFAM" id="SSF55186">
    <property type="entry name" value="ThrRS/AlaRS common domain"/>
    <property type="match status" value="1"/>
</dbReference>
<dbReference type="PROSITE" id="PS50862">
    <property type="entry name" value="AA_TRNA_LIGASE_II"/>
    <property type="match status" value="1"/>
</dbReference>
<feature type="chain" id="PRO_1000020346" description="Threonine--tRNA ligase">
    <location>
        <begin position="1"/>
        <end position="581"/>
    </location>
</feature>
<feature type="region of interest" description="Catalytic" evidence="1">
    <location>
        <begin position="185"/>
        <end position="478"/>
    </location>
</feature>
<feature type="binding site" evidence="1">
    <location>
        <position position="278"/>
    </location>
    <ligand>
        <name>Zn(2+)</name>
        <dbReference type="ChEBI" id="CHEBI:29105"/>
    </ligand>
</feature>
<feature type="binding site" evidence="1">
    <location>
        <position position="329"/>
    </location>
    <ligand>
        <name>Zn(2+)</name>
        <dbReference type="ChEBI" id="CHEBI:29105"/>
    </ligand>
</feature>
<feature type="binding site" evidence="1">
    <location>
        <position position="455"/>
    </location>
    <ligand>
        <name>Zn(2+)</name>
        <dbReference type="ChEBI" id="CHEBI:29105"/>
    </ligand>
</feature>
<evidence type="ECO:0000255" key="1">
    <source>
        <dbReference type="HAMAP-Rule" id="MF_00184"/>
    </source>
</evidence>
<proteinExistence type="inferred from homology"/>
<reference key="1">
    <citation type="journal article" date="2006" name="BMC Genomics">
        <title>Comparative genome analysis: selection pressure on the Borrelia vls cassettes is essential for infectivity.</title>
        <authorList>
            <person name="Gloeckner G."/>
            <person name="Schulte-Spechtel U."/>
            <person name="Schilhabel M."/>
            <person name="Felder M."/>
            <person name="Suehnel J."/>
            <person name="Wilske B."/>
            <person name="Platzer M."/>
        </authorList>
    </citation>
    <scope>NUCLEOTIDE SEQUENCE [LARGE SCALE GENOMIC DNA]</scope>
    <source>
        <strain>PKo</strain>
    </source>
</reference>
<reference key="2">
    <citation type="journal article" date="2011" name="J. Bacteriol.">
        <title>Whole-genome sequences of two Borrelia afzelii and two Borrelia garinii Lyme disease agent isolates.</title>
        <authorList>
            <person name="Casjens S.R."/>
            <person name="Mongodin E.F."/>
            <person name="Qiu W.G."/>
            <person name="Dunn J.J."/>
            <person name="Luft B.J."/>
            <person name="Fraser-Liggett C.M."/>
            <person name="Schutzer S.E."/>
        </authorList>
    </citation>
    <scope>NUCLEOTIDE SEQUENCE [LARGE SCALE GENOMIC DNA]</scope>
    <source>
        <strain>PKo</strain>
    </source>
</reference>